<feature type="chain" id="PRO_1000212322" description="Large ribosomal subunit protein eL39">
    <location>
        <begin position="1"/>
        <end position="51"/>
    </location>
</feature>
<gene>
    <name evidence="1" type="primary">rpl39e</name>
    <name type="ordered locus">M164_1800</name>
</gene>
<reference key="1">
    <citation type="journal article" date="2009" name="Proc. Natl. Acad. Sci. U.S.A.">
        <title>Biogeography of the Sulfolobus islandicus pan-genome.</title>
        <authorList>
            <person name="Reno M.L."/>
            <person name="Held N.L."/>
            <person name="Fields C.J."/>
            <person name="Burke P.V."/>
            <person name="Whitaker R.J."/>
        </authorList>
    </citation>
    <scope>NUCLEOTIDE SEQUENCE [LARGE SCALE GENOMIC DNA]</scope>
    <source>
        <strain>M.16.4 / Kamchatka #3</strain>
    </source>
</reference>
<comment type="similarity">
    <text evidence="1">Belongs to the eukaryotic ribosomal protein eL39 family.</text>
</comment>
<protein>
    <recommendedName>
        <fullName evidence="1">Large ribosomal subunit protein eL39</fullName>
    </recommendedName>
    <alternativeName>
        <fullName evidence="2">50S ribosomal protein L39e</fullName>
    </alternativeName>
</protein>
<name>RL39_SACI6</name>
<proteinExistence type="inferred from homology"/>
<organism>
    <name type="scientific">Saccharolobus islandicus (strain M.16.4 / Kamchatka #3)</name>
    <name type="common">Sulfolobus islandicus</name>
    <dbReference type="NCBI Taxonomy" id="426118"/>
    <lineage>
        <taxon>Archaea</taxon>
        <taxon>Thermoproteota</taxon>
        <taxon>Thermoprotei</taxon>
        <taxon>Sulfolobales</taxon>
        <taxon>Sulfolobaceae</taxon>
        <taxon>Saccharolobus</taxon>
    </lineage>
</organism>
<dbReference type="EMBL" id="CP001402">
    <property type="protein sequence ID" value="ACR42403.1"/>
    <property type="molecule type" value="Genomic_DNA"/>
</dbReference>
<dbReference type="RefSeq" id="WP_009990648.1">
    <property type="nucleotide sequence ID" value="NC_012726.1"/>
</dbReference>
<dbReference type="SMR" id="C4KII9"/>
<dbReference type="KEGG" id="sid:M164_1800"/>
<dbReference type="HOGENOM" id="CLU_181948_4_0_2"/>
<dbReference type="Proteomes" id="UP000001479">
    <property type="component" value="Chromosome"/>
</dbReference>
<dbReference type="GO" id="GO:0022625">
    <property type="term" value="C:cytosolic large ribosomal subunit"/>
    <property type="evidence" value="ECO:0007669"/>
    <property type="project" value="TreeGrafter"/>
</dbReference>
<dbReference type="GO" id="GO:0003735">
    <property type="term" value="F:structural constituent of ribosome"/>
    <property type="evidence" value="ECO:0007669"/>
    <property type="project" value="InterPro"/>
</dbReference>
<dbReference type="GO" id="GO:0006412">
    <property type="term" value="P:translation"/>
    <property type="evidence" value="ECO:0007669"/>
    <property type="project" value="UniProtKB-UniRule"/>
</dbReference>
<dbReference type="FunFam" id="1.10.1620.10:FF:000001">
    <property type="entry name" value="60S ribosomal protein-like L39"/>
    <property type="match status" value="1"/>
</dbReference>
<dbReference type="Gene3D" id="1.10.1620.10">
    <property type="entry name" value="Ribosomal protein L39e"/>
    <property type="match status" value="1"/>
</dbReference>
<dbReference type="HAMAP" id="MF_00629">
    <property type="entry name" value="Ribosomal_eL39"/>
    <property type="match status" value="1"/>
</dbReference>
<dbReference type="InterPro" id="IPR000077">
    <property type="entry name" value="Ribosomal_eL39"/>
</dbReference>
<dbReference type="InterPro" id="IPR020083">
    <property type="entry name" value="Ribosomal_eL39_CS"/>
</dbReference>
<dbReference type="InterPro" id="IPR023626">
    <property type="entry name" value="Ribosomal_eL39_dom_sf"/>
</dbReference>
<dbReference type="NCBIfam" id="NF002316">
    <property type="entry name" value="PRK01242.1"/>
    <property type="match status" value="1"/>
</dbReference>
<dbReference type="PANTHER" id="PTHR19970:SF0">
    <property type="entry name" value="LARGE RIBOSOMAL SUBUNIT PROTEIN EL39"/>
    <property type="match status" value="1"/>
</dbReference>
<dbReference type="PANTHER" id="PTHR19970">
    <property type="entry name" value="RIBOSOMAL PROTEIN L39E"/>
    <property type="match status" value="1"/>
</dbReference>
<dbReference type="Pfam" id="PF00832">
    <property type="entry name" value="Ribosomal_L39"/>
    <property type="match status" value="1"/>
</dbReference>
<dbReference type="SUPFAM" id="SSF48662">
    <property type="entry name" value="Ribosomal protein L39e"/>
    <property type="match status" value="1"/>
</dbReference>
<dbReference type="PROSITE" id="PS00051">
    <property type="entry name" value="RIBOSOMAL_L39E"/>
    <property type="match status" value="1"/>
</dbReference>
<evidence type="ECO:0000255" key="1">
    <source>
        <dbReference type="HAMAP-Rule" id="MF_00629"/>
    </source>
</evidence>
<evidence type="ECO:0000305" key="2"/>
<accession>C4KII9</accession>
<sequence>MSRNKPVAKKFRLAKALKANSPIPIWIVLKTRGRVRYNPLRRNWRRNDLKV</sequence>
<keyword id="KW-0687">Ribonucleoprotein</keyword>
<keyword id="KW-0689">Ribosomal protein</keyword>